<name>RME1_YEAST</name>
<comment type="function">
    <text evidence="4 5">Involved in the control of meiosis. Represses the transcription of the IME1 gene thereby inhibiting cells from entering meiosis. But also activates the CLN2 gene thus promoting mitosis.</text>
</comment>
<comment type="subcellular location">
    <subcellularLocation>
        <location>Nucleus</location>
    </subcellularLocation>
</comment>
<accession>P32338</accession>
<accession>D6VUI2</accession>
<accession>Q45TA6</accession>
<gene>
    <name type="primary">RME1</name>
    <name type="ordered locus">YGR044C</name>
</gene>
<dbReference type="EMBL" id="M76447">
    <property type="protein sequence ID" value="AAA35238.1"/>
    <property type="molecule type" value="Genomic_DNA"/>
</dbReference>
<dbReference type="EMBL" id="DQ116799">
    <property type="protein sequence ID" value="AAZ29879.1"/>
    <property type="molecule type" value="Genomic_DNA"/>
</dbReference>
<dbReference type="EMBL" id="DQ116801">
    <property type="protein sequence ID" value="AAZ29881.1"/>
    <property type="molecule type" value="Genomic_DNA"/>
</dbReference>
<dbReference type="EMBL" id="DQ116802">
    <property type="protein sequence ID" value="AAZ29882.1"/>
    <property type="molecule type" value="Genomic_DNA"/>
</dbReference>
<dbReference type="EMBL" id="DQ116804">
    <property type="protein sequence ID" value="AAZ29884.1"/>
    <property type="molecule type" value="Genomic_DNA"/>
</dbReference>
<dbReference type="EMBL" id="DQ116805">
    <property type="protein sequence ID" value="AAZ29885.1"/>
    <property type="molecule type" value="Genomic_DNA"/>
</dbReference>
<dbReference type="EMBL" id="DQ116806">
    <property type="protein sequence ID" value="AAZ29886.1"/>
    <property type="molecule type" value="Genomic_DNA"/>
</dbReference>
<dbReference type="EMBL" id="DQ116807">
    <property type="protein sequence ID" value="AAZ29887.1"/>
    <property type="molecule type" value="Genomic_DNA"/>
</dbReference>
<dbReference type="EMBL" id="Z72829">
    <property type="protein sequence ID" value="CAA97043.1"/>
    <property type="molecule type" value="Genomic_DNA"/>
</dbReference>
<dbReference type="EMBL" id="BK006941">
    <property type="protein sequence ID" value="DAA08143.1"/>
    <property type="molecule type" value="Genomic_DNA"/>
</dbReference>
<dbReference type="PIR" id="A41517">
    <property type="entry name" value="A41517"/>
</dbReference>
<dbReference type="RefSeq" id="NP_011558.1">
    <property type="nucleotide sequence ID" value="NM_001181173.1"/>
</dbReference>
<dbReference type="BioGRID" id="33291">
    <property type="interactions" value="167"/>
</dbReference>
<dbReference type="FunCoup" id="P32338">
    <property type="interactions" value="776"/>
</dbReference>
<dbReference type="IntAct" id="P32338">
    <property type="interactions" value="1"/>
</dbReference>
<dbReference type="STRING" id="4932.YGR044C"/>
<dbReference type="iPTMnet" id="P32338"/>
<dbReference type="PaxDb" id="4932-YGR044C"/>
<dbReference type="PeptideAtlas" id="P32338"/>
<dbReference type="EnsemblFungi" id="YGR044C_mRNA">
    <property type="protein sequence ID" value="YGR044C"/>
    <property type="gene ID" value="YGR044C"/>
</dbReference>
<dbReference type="GeneID" id="852935"/>
<dbReference type="KEGG" id="sce:YGR044C"/>
<dbReference type="AGR" id="SGD:S000003276"/>
<dbReference type="SGD" id="S000003276">
    <property type="gene designation" value="RME1"/>
</dbReference>
<dbReference type="VEuPathDB" id="FungiDB:YGR044C"/>
<dbReference type="eggNOG" id="KOG1721">
    <property type="taxonomic scope" value="Eukaryota"/>
</dbReference>
<dbReference type="HOGENOM" id="CLU_943837_0_0_1"/>
<dbReference type="InParanoid" id="P32338"/>
<dbReference type="OMA" id="IADSTYC"/>
<dbReference type="OrthoDB" id="6910977at2759"/>
<dbReference type="BioCyc" id="YEAST:G3O-30763-MONOMER"/>
<dbReference type="BioGRID-ORCS" id="852935">
    <property type="hits" value="1 hit in 13 CRISPR screens"/>
</dbReference>
<dbReference type="PRO" id="PR:P32338"/>
<dbReference type="Proteomes" id="UP000002311">
    <property type="component" value="Chromosome VII"/>
</dbReference>
<dbReference type="RNAct" id="P32338">
    <property type="molecule type" value="protein"/>
</dbReference>
<dbReference type="GO" id="GO:0005737">
    <property type="term" value="C:cytoplasm"/>
    <property type="evidence" value="ECO:0007005"/>
    <property type="project" value="SGD"/>
</dbReference>
<dbReference type="GO" id="GO:0005634">
    <property type="term" value="C:nucleus"/>
    <property type="evidence" value="ECO:0000314"/>
    <property type="project" value="SGD"/>
</dbReference>
<dbReference type="GO" id="GO:0000981">
    <property type="term" value="F:DNA-binding transcription factor activity, RNA polymerase II-specific"/>
    <property type="evidence" value="ECO:0000315"/>
    <property type="project" value="SGD"/>
</dbReference>
<dbReference type="GO" id="GO:0000978">
    <property type="term" value="F:RNA polymerase II cis-regulatory region sequence-specific DNA binding"/>
    <property type="evidence" value="ECO:0000314"/>
    <property type="project" value="SGD"/>
</dbReference>
<dbReference type="GO" id="GO:0008270">
    <property type="term" value="F:zinc ion binding"/>
    <property type="evidence" value="ECO:0007669"/>
    <property type="project" value="UniProtKB-KW"/>
</dbReference>
<dbReference type="GO" id="GO:0051301">
    <property type="term" value="P:cell division"/>
    <property type="evidence" value="ECO:0007669"/>
    <property type="project" value="UniProtKB-KW"/>
</dbReference>
<dbReference type="GO" id="GO:0000082">
    <property type="term" value="P:G1/S transition of mitotic cell cycle"/>
    <property type="evidence" value="ECO:0000314"/>
    <property type="project" value="SGD"/>
</dbReference>
<dbReference type="GO" id="GO:0051321">
    <property type="term" value="P:meiotic cell cycle"/>
    <property type="evidence" value="ECO:0000315"/>
    <property type="project" value="SGD"/>
</dbReference>
<dbReference type="GO" id="GO:0045835">
    <property type="term" value="P:negative regulation of meiotic nuclear division"/>
    <property type="evidence" value="ECO:0000315"/>
    <property type="project" value="SGD"/>
</dbReference>
<dbReference type="GO" id="GO:0000122">
    <property type="term" value="P:negative regulation of transcription by RNA polymerase II"/>
    <property type="evidence" value="ECO:0000314"/>
    <property type="project" value="SGD"/>
</dbReference>
<dbReference type="GO" id="GO:2000219">
    <property type="term" value="P:positive regulation of invasive growth in response to glucose limitation"/>
    <property type="evidence" value="ECO:0000314"/>
    <property type="project" value="SGD"/>
</dbReference>
<dbReference type="GO" id="GO:0045944">
    <property type="term" value="P:positive regulation of transcription by RNA polymerase II"/>
    <property type="evidence" value="ECO:0000314"/>
    <property type="project" value="SGD"/>
</dbReference>
<dbReference type="Gene3D" id="3.30.160.60">
    <property type="entry name" value="Classic Zinc Finger"/>
    <property type="match status" value="2"/>
</dbReference>
<dbReference type="InterPro" id="IPR013087">
    <property type="entry name" value="Znf_C2H2_type"/>
</dbReference>
<dbReference type="Pfam" id="PF00096">
    <property type="entry name" value="zf-C2H2"/>
    <property type="match status" value="1"/>
</dbReference>
<dbReference type="SMART" id="SM00355">
    <property type="entry name" value="ZnF_C2H2"/>
    <property type="match status" value="3"/>
</dbReference>
<dbReference type="PROSITE" id="PS00028">
    <property type="entry name" value="ZINC_FINGER_C2H2_1"/>
    <property type="match status" value="1"/>
</dbReference>
<dbReference type="PROSITE" id="PS50157">
    <property type="entry name" value="ZINC_FINGER_C2H2_2"/>
    <property type="match status" value="2"/>
</dbReference>
<reference key="1">
    <citation type="journal article" date="1991" name="Genes Dev.">
        <title>The yeast RME1 gene encodes a putative zinc finger protein that is directly repressed by a1-alpha 2.</title>
        <authorList>
            <person name="Covitz P.A."/>
            <person name="Herskowitz I."/>
            <person name="Mitchell A.P."/>
        </authorList>
    </citation>
    <scope>NUCLEOTIDE SEQUENCE [GENOMIC DNA]</scope>
    <scope>MUTAGENESIS OF CYS-183; CYS-213 AND CYS-263</scope>
</reference>
<reference key="2">
    <citation type="submission" date="2005-07" db="EMBL/GenBank/DDBJ databases">
        <title>Molecular genetic dissection of a quantitative trait in yeast.</title>
        <authorList>
            <person name="Deutschbauer A.M."/>
            <person name="Davis R.W."/>
        </authorList>
    </citation>
    <scope>NUCLEOTIDE SEQUENCE [GENOMIC DNA]</scope>
    <source>
        <strain>ATCC 200060 / W303</strain>
        <strain>ATCC 204508 / S288c</strain>
        <strain>ATCC 204626 / S288c / A364A</strain>
        <strain>ATCC 24657 / D273-10B</strain>
        <strain>YJM 145</strain>
        <strain>YJM 269</strain>
        <strain>YJM 270</strain>
    </source>
</reference>
<reference key="3">
    <citation type="journal article" date="1997" name="Nature">
        <title>The nucleotide sequence of Saccharomyces cerevisiae chromosome VII.</title>
        <authorList>
            <person name="Tettelin H."/>
            <person name="Agostoni-Carbone M.L."/>
            <person name="Albermann K."/>
            <person name="Albers M."/>
            <person name="Arroyo J."/>
            <person name="Backes U."/>
            <person name="Barreiros T."/>
            <person name="Bertani I."/>
            <person name="Bjourson A.J."/>
            <person name="Brueckner M."/>
            <person name="Bruschi C.V."/>
            <person name="Carignani G."/>
            <person name="Castagnoli L."/>
            <person name="Cerdan E."/>
            <person name="Clemente M.L."/>
            <person name="Coblenz A."/>
            <person name="Coglievina M."/>
            <person name="Coissac E."/>
            <person name="Defoor E."/>
            <person name="Del Bino S."/>
            <person name="Delius H."/>
            <person name="Delneri D."/>
            <person name="de Wergifosse P."/>
            <person name="Dujon B."/>
            <person name="Durand P."/>
            <person name="Entian K.-D."/>
            <person name="Eraso P."/>
            <person name="Escribano V."/>
            <person name="Fabiani L."/>
            <person name="Fartmann B."/>
            <person name="Feroli F."/>
            <person name="Feuermann M."/>
            <person name="Frontali L."/>
            <person name="Garcia-Gonzalez M."/>
            <person name="Garcia-Saez M.I."/>
            <person name="Goffeau A."/>
            <person name="Guerreiro P."/>
            <person name="Hani J."/>
            <person name="Hansen M."/>
            <person name="Hebling U."/>
            <person name="Hernandez K."/>
            <person name="Heumann K."/>
            <person name="Hilger F."/>
            <person name="Hofmann B."/>
            <person name="Indge K.J."/>
            <person name="James C.M."/>
            <person name="Klima R."/>
            <person name="Koetter P."/>
            <person name="Kramer B."/>
            <person name="Kramer W."/>
            <person name="Lauquin G."/>
            <person name="Leuther H."/>
            <person name="Louis E.J."/>
            <person name="Maillier E."/>
            <person name="Marconi A."/>
            <person name="Martegani E."/>
            <person name="Mazon M.J."/>
            <person name="Mazzoni C."/>
            <person name="McReynolds A.D.K."/>
            <person name="Melchioretto P."/>
            <person name="Mewes H.-W."/>
            <person name="Minenkova O."/>
            <person name="Mueller-Auer S."/>
            <person name="Nawrocki A."/>
            <person name="Netter P."/>
            <person name="Neu R."/>
            <person name="Nombela C."/>
            <person name="Oliver S.G."/>
            <person name="Panzeri L."/>
            <person name="Paoluzi S."/>
            <person name="Plevani P."/>
            <person name="Portetelle D."/>
            <person name="Portillo F."/>
            <person name="Potier S."/>
            <person name="Purnelle B."/>
            <person name="Rieger M."/>
            <person name="Riles L."/>
            <person name="Rinaldi T."/>
            <person name="Robben J."/>
            <person name="Rodrigues-Pousada C."/>
            <person name="Rodriguez-Belmonte E."/>
            <person name="Rodriguez-Torres A.M."/>
            <person name="Rose M."/>
            <person name="Ruzzi M."/>
            <person name="Saliola M."/>
            <person name="Sanchez-Perez M."/>
            <person name="Schaefer B."/>
            <person name="Schaefer M."/>
            <person name="Scharfe M."/>
            <person name="Schmidheini T."/>
            <person name="Schreer A."/>
            <person name="Skala J."/>
            <person name="Souciet J.-L."/>
            <person name="Steensma H.Y."/>
            <person name="Talla E."/>
            <person name="Thierry A."/>
            <person name="Vandenbol M."/>
            <person name="van der Aart Q.J.M."/>
            <person name="Van Dyck L."/>
            <person name="Vanoni M."/>
            <person name="Verhasselt P."/>
            <person name="Voet M."/>
            <person name="Volckaert G."/>
            <person name="Wambutt R."/>
            <person name="Watson M.D."/>
            <person name="Weber N."/>
            <person name="Wedler E."/>
            <person name="Wedler H."/>
            <person name="Wipfli P."/>
            <person name="Wolf K."/>
            <person name="Wright L.F."/>
            <person name="Zaccaria P."/>
            <person name="Zimmermann M."/>
            <person name="Zollner A."/>
            <person name="Kleine K."/>
        </authorList>
    </citation>
    <scope>NUCLEOTIDE SEQUENCE [LARGE SCALE GENOMIC DNA]</scope>
    <source>
        <strain>ATCC 204508 / S288c</strain>
    </source>
</reference>
<reference key="4">
    <citation type="journal article" date="2014" name="G3 (Bethesda)">
        <title>The reference genome sequence of Saccharomyces cerevisiae: Then and now.</title>
        <authorList>
            <person name="Engel S.R."/>
            <person name="Dietrich F.S."/>
            <person name="Fisk D.G."/>
            <person name="Binkley G."/>
            <person name="Balakrishnan R."/>
            <person name="Costanzo M.C."/>
            <person name="Dwight S.S."/>
            <person name="Hitz B.C."/>
            <person name="Karra K."/>
            <person name="Nash R.S."/>
            <person name="Weng S."/>
            <person name="Wong E.D."/>
            <person name="Lloyd P."/>
            <person name="Skrzypek M.S."/>
            <person name="Miyasato S.R."/>
            <person name="Simison M."/>
            <person name="Cherry J.M."/>
        </authorList>
    </citation>
    <scope>GENOME REANNOTATION</scope>
    <source>
        <strain>ATCC 204508 / S288c</strain>
    </source>
</reference>
<reference key="5">
    <citation type="journal article" date="1993" name="Genes Dev.">
        <title>Repression by the yeast meiotic inhibitor RME1.</title>
        <authorList>
            <person name="Covitz P.A."/>
            <person name="Mitchell A.P."/>
        </authorList>
    </citation>
    <scope>FUNCTION</scope>
</reference>
<reference key="6">
    <citation type="journal article" date="1995" name="EMBO J.">
        <title>Rme1, a negative regulator of meiosis, is also a positive activator of G1 cyclin gene expression.</title>
        <authorList>
            <person name="Toone W.M."/>
            <person name="Johnson A.L."/>
            <person name="Banks G.R."/>
            <person name="Toyn J.H."/>
            <person name="Stuart D."/>
            <person name="Wittenberg C."/>
            <person name="Johnston L.H."/>
        </authorList>
    </citation>
    <scope>FUNCTION</scope>
</reference>
<organism>
    <name type="scientific">Saccharomyces cerevisiae (strain ATCC 204508 / S288c)</name>
    <name type="common">Baker's yeast</name>
    <dbReference type="NCBI Taxonomy" id="559292"/>
    <lineage>
        <taxon>Eukaryota</taxon>
        <taxon>Fungi</taxon>
        <taxon>Dikarya</taxon>
        <taxon>Ascomycota</taxon>
        <taxon>Saccharomycotina</taxon>
        <taxon>Saccharomycetes</taxon>
        <taxon>Saccharomycetales</taxon>
        <taxon>Saccharomycetaceae</taxon>
        <taxon>Saccharomyces</taxon>
    </lineage>
</organism>
<proteinExistence type="evidence at protein level"/>
<sequence>MSPCYGQNSAIAKGSWNREVLQEVQPIYHWHDFGQNMKEYSASPLEGDSSLPSSLPSSTEDCLLLSLENTITVIAGNQRQAYDSTSSTEEGTAPQLRPDEIADSTHCITSLVDPEFRDLINYGRQKGANPVFIESNTTEQSHSQCILGYPQKSHVAQLYHDPKVLSTISEGQTKRGSYHCSHCSEKFATLVEFAAHLDEFNLERPCKCPIEQCPWKILGFQQATGLRRHCASQHIGELDIEMEKSLNLKVEKYPGLNCPFPICQKTFRRKDAYKRHVAMVHNNADSRFNKRLKKILNNTK</sequence>
<evidence type="ECO:0000255" key="1">
    <source>
        <dbReference type="PROSITE-ProRule" id="PRU00042"/>
    </source>
</evidence>
<evidence type="ECO:0000256" key="2">
    <source>
        <dbReference type="SAM" id="MobiDB-lite"/>
    </source>
</evidence>
<evidence type="ECO:0000269" key="3">
    <source>
    </source>
</evidence>
<evidence type="ECO:0000269" key="4">
    <source>
    </source>
</evidence>
<evidence type="ECO:0000269" key="5">
    <source>
    </source>
</evidence>
<protein>
    <recommendedName>
        <fullName>Zinc finger protein RME1</fullName>
    </recommendedName>
</protein>
<keyword id="KW-0010">Activator</keyword>
<keyword id="KW-0131">Cell cycle</keyword>
<keyword id="KW-0132">Cell division</keyword>
<keyword id="KW-0238">DNA-binding</keyword>
<keyword id="KW-0469">Meiosis</keyword>
<keyword id="KW-0479">Metal-binding</keyword>
<keyword id="KW-0498">Mitosis</keyword>
<keyword id="KW-0539">Nucleus</keyword>
<keyword id="KW-1185">Reference proteome</keyword>
<keyword id="KW-0677">Repeat</keyword>
<keyword id="KW-0678">Repressor</keyword>
<keyword id="KW-0804">Transcription</keyword>
<keyword id="KW-0805">Transcription regulation</keyword>
<keyword id="KW-0862">Zinc</keyword>
<keyword id="KW-0863">Zinc-finger</keyword>
<feature type="chain" id="PRO_0000046848" description="Zinc finger protein RME1">
    <location>
        <begin position="1"/>
        <end position="300"/>
    </location>
</feature>
<feature type="zinc finger region" description="C2H2-type 1" evidence="1">
    <location>
        <begin position="178"/>
        <end position="199"/>
    </location>
</feature>
<feature type="zinc finger region" description="C2H2-type 2" evidence="1">
    <location>
        <begin position="206"/>
        <end position="234"/>
    </location>
</feature>
<feature type="zinc finger region" description="C2H2-type 3" evidence="1">
    <location>
        <begin position="256"/>
        <end position="281"/>
    </location>
</feature>
<feature type="region of interest" description="Disordered" evidence="2">
    <location>
        <begin position="80"/>
        <end position="100"/>
    </location>
</feature>
<feature type="compositionally biased region" description="Polar residues" evidence="2">
    <location>
        <begin position="80"/>
        <end position="90"/>
    </location>
</feature>
<feature type="mutagenesis site" description="Inactivates RME1." evidence="3">
    <original>C</original>
    <variation>S</variation>
    <location>
        <position position="183"/>
    </location>
</feature>
<feature type="mutagenesis site" description="Inactivates RME1." evidence="3">
    <original>C</original>
    <variation>S</variation>
    <location>
        <position position="213"/>
    </location>
</feature>
<feature type="mutagenesis site" description="Inactivates RME1." evidence="3">
    <original>C</original>
    <variation>S</variation>
    <location>
        <position position="263"/>
    </location>
</feature>